<feature type="chain" id="PRO_1000048386" description="DNA repair and recombination protein RadA">
    <location>
        <begin position="1"/>
        <end position="325"/>
    </location>
</feature>
<feature type="binding site" evidence="1">
    <location>
        <begin position="107"/>
        <end position="114"/>
    </location>
    <ligand>
        <name>ATP</name>
        <dbReference type="ChEBI" id="CHEBI:30616"/>
    </ligand>
</feature>
<organism>
    <name type="scientific">Methanococcoides burtonii (strain DSM 6242 / NBRC 107633 / OCM 468 / ACE-M)</name>
    <dbReference type="NCBI Taxonomy" id="259564"/>
    <lineage>
        <taxon>Archaea</taxon>
        <taxon>Methanobacteriati</taxon>
        <taxon>Methanobacteriota</taxon>
        <taxon>Stenosarchaea group</taxon>
        <taxon>Methanomicrobia</taxon>
        <taxon>Methanosarcinales</taxon>
        <taxon>Methanosarcinaceae</taxon>
        <taxon>Methanococcoides</taxon>
    </lineage>
</organism>
<evidence type="ECO:0000255" key="1">
    <source>
        <dbReference type="HAMAP-Rule" id="MF_00348"/>
    </source>
</evidence>
<gene>
    <name evidence="1" type="primary">radA</name>
    <name type="ordered locus">Mbur_2033</name>
</gene>
<protein>
    <recommendedName>
        <fullName evidence="1">DNA repair and recombination protein RadA</fullName>
    </recommendedName>
</protein>
<keyword id="KW-0067">ATP-binding</keyword>
<keyword id="KW-0227">DNA damage</keyword>
<keyword id="KW-0233">DNA recombination</keyword>
<keyword id="KW-0238">DNA-binding</keyword>
<keyword id="KW-0547">Nucleotide-binding</keyword>
<accession>Q12UG7</accession>
<comment type="function">
    <text evidence="1">Involved in DNA repair and in homologous recombination. Binds and assemble on single-stranded DNA to form a nucleoprotein filament. Hydrolyzes ATP in a ssDNA-dependent manner and promotes DNA strand exchange between homologous DNA molecules.</text>
</comment>
<comment type="similarity">
    <text evidence="1">Belongs to the eukaryotic RecA-like protein family.</text>
</comment>
<proteinExistence type="inferred from homology"/>
<sequence length="325" mass="35115">MTEVLLEDLDHVGPATAQKLKDAGFTTIEAIAVASPAELANSAEIGESTAAKIINAARQSADIGGFETGDLVLERRKLVGKLSTGCTEFDEMMGGGIETQSITEMYGEFGSGKTQIAHQLAVNVQLPPEQGGLGGSVIMIDTENTFRPERIAQMVKGISDKHGIEYDPEEFLKNIHVARAFNSNHQILLVDSANELANELKNTEMPVKLLIVDSLTAHFRAEYIGRGTLADRQQKLNKHLHEILRFGDLSNACVVVTNQVMSKPDAFFGDPTKPIGGHILGHTATFRLYIRKSKGEKRIVKLVDSPNLPDGEALISVTTDGIGDA</sequence>
<dbReference type="EMBL" id="CP000300">
    <property type="protein sequence ID" value="ABE52909.1"/>
    <property type="molecule type" value="Genomic_DNA"/>
</dbReference>
<dbReference type="RefSeq" id="WP_011500049.1">
    <property type="nucleotide sequence ID" value="NC_007955.1"/>
</dbReference>
<dbReference type="SMR" id="Q12UG7"/>
<dbReference type="STRING" id="259564.Mbur_2033"/>
<dbReference type="GeneID" id="3997415"/>
<dbReference type="KEGG" id="mbu:Mbur_2033"/>
<dbReference type="HOGENOM" id="CLU_041732_0_0_2"/>
<dbReference type="OrthoDB" id="31129at2157"/>
<dbReference type="Proteomes" id="UP000001979">
    <property type="component" value="Chromosome"/>
</dbReference>
<dbReference type="GO" id="GO:0005524">
    <property type="term" value="F:ATP binding"/>
    <property type="evidence" value="ECO:0007669"/>
    <property type="project" value="UniProtKB-UniRule"/>
</dbReference>
<dbReference type="GO" id="GO:0016887">
    <property type="term" value="F:ATP hydrolysis activity"/>
    <property type="evidence" value="ECO:0007669"/>
    <property type="project" value="InterPro"/>
</dbReference>
<dbReference type="GO" id="GO:0140664">
    <property type="term" value="F:ATP-dependent DNA damage sensor activity"/>
    <property type="evidence" value="ECO:0007669"/>
    <property type="project" value="InterPro"/>
</dbReference>
<dbReference type="GO" id="GO:0003684">
    <property type="term" value="F:damaged DNA binding"/>
    <property type="evidence" value="ECO:0007669"/>
    <property type="project" value="UniProtKB-UniRule"/>
</dbReference>
<dbReference type="GO" id="GO:0006310">
    <property type="term" value="P:DNA recombination"/>
    <property type="evidence" value="ECO:0007669"/>
    <property type="project" value="UniProtKB-UniRule"/>
</dbReference>
<dbReference type="GO" id="GO:0006281">
    <property type="term" value="P:DNA repair"/>
    <property type="evidence" value="ECO:0007669"/>
    <property type="project" value="UniProtKB-UniRule"/>
</dbReference>
<dbReference type="CDD" id="cd19515">
    <property type="entry name" value="archRadA"/>
    <property type="match status" value="1"/>
</dbReference>
<dbReference type="FunFam" id="3.40.50.300:FF:002052">
    <property type="entry name" value="DNA repair protein RAD51 homolog"/>
    <property type="match status" value="1"/>
</dbReference>
<dbReference type="Gene3D" id="1.10.150.20">
    <property type="entry name" value="5' to 3' exonuclease, C-terminal subdomain"/>
    <property type="match status" value="1"/>
</dbReference>
<dbReference type="Gene3D" id="3.40.50.300">
    <property type="entry name" value="P-loop containing nucleotide triphosphate hydrolases"/>
    <property type="match status" value="1"/>
</dbReference>
<dbReference type="HAMAP" id="MF_00348">
    <property type="entry name" value="RadA_arch"/>
    <property type="match status" value="1"/>
</dbReference>
<dbReference type="InterPro" id="IPR003593">
    <property type="entry name" value="AAA+_ATPase"/>
</dbReference>
<dbReference type="InterPro" id="IPR013632">
    <property type="entry name" value="DNA_recomb/repair_Rad51_C"/>
</dbReference>
<dbReference type="InterPro" id="IPR011938">
    <property type="entry name" value="DNA_recomb/repair_RadA"/>
</dbReference>
<dbReference type="InterPro" id="IPR016467">
    <property type="entry name" value="DNA_recomb/repair_RecA-like"/>
</dbReference>
<dbReference type="InterPro" id="IPR010995">
    <property type="entry name" value="DNA_repair_Rad51/TF_NusA_a-hlx"/>
</dbReference>
<dbReference type="InterPro" id="IPR027417">
    <property type="entry name" value="P-loop_NTPase"/>
</dbReference>
<dbReference type="InterPro" id="IPR020588">
    <property type="entry name" value="RecA_ATP-bd"/>
</dbReference>
<dbReference type="InterPro" id="IPR020587">
    <property type="entry name" value="RecA_monomer-monomer_interface"/>
</dbReference>
<dbReference type="NCBIfam" id="NF003301">
    <property type="entry name" value="PRK04301.1"/>
    <property type="match status" value="1"/>
</dbReference>
<dbReference type="NCBIfam" id="TIGR02236">
    <property type="entry name" value="recomb_radA"/>
    <property type="match status" value="1"/>
</dbReference>
<dbReference type="PANTHER" id="PTHR22942:SF30">
    <property type="entry name" value="MEIOTIC RECOMBINATION PROTEIN DMC1_LIM15 HOMOLOG"/>
    <property type="match status" value="1"/>
</dbReference>
<dbReference type="PANTHER" id="PTHR22942">
    <property type="entry name" value="RECA/RAD51/RADA DNA STRAND-PAIRING FAMILY MEMBER"/>
    <property type="match status" value="1"/>
</dbReference>
<dbReference type="Pfam" id="PF14520">
    <property type="entry name" value="HHH_5"/>
    <property type="match status" value="1"/>
</dbReference>
<dbReference type="Pfam" id="PF08423">
    <property type="entry name" value="Rad51"/>
    <property type="match status" value="1"/>
</dbReference>
<dbReference type="PIRSF" id="PIRSF005856">
    <property type="entry name" value="Rad51"/>
    <property type="match status" value="1"/>
</dbReference>
<dbReference type="SMART" id="SM00382">
    <property type="entry name" value="AAA"/>
    <property type="match status" value="1"/>
</dbReference>
<dbReference type="SUPFAM" id="SSF52540">
    <property type="entry name" value="P-loop containing nucleoside triphosphate hydrolases"/>
    <property type="match status" value="1"/>
</dbReference>
<dbReference type="SUPFAM" id="SSF47794">
    <property type="entry name" value="Rad51 N-terminal domain-like"/>
    <property type="match status" value="1"/>
</dbReference>
<dbReference type="PROSITE" id="PS50162">
    <property type="entry name" value="RECA_2"/>
    <property type="match status" value="1"/>
</dbReference>
<dbReference type="PROSITE" id="PS50163">
    <property type="entry name" value="RECA_3"/>
    <property type="match status" value="1"/>
</dbReference>
<name>RADA_METBU</name>
<reference key="1">
    <citation type="journal article" date="2009" name="ISME J.">
        <title>The genome sequence of the psychrophilic archaeon, Methanococcoides burtonii: the role of genome evolution in cold adaptation.</title>
        <authorList>
            <person name="Allen M.A."/>
            <person name="Lauro F.M."/>
            <person name="Williams T.J."/>
            <person name="Burg D."/>
            <person name="Siddiqui K.S."/>
            <person name="De Francisci D."/>
            <person name="Chong K.W."/>
            <person name="Pilak O."/>
            <person name="Chew H.H."/>
            <person name="De Maere M.Z."/>
            <person name="Ting L."/>
            <person name="Katrib M."/>
            <person name="Ng C."/>
            <person name="Sowers K.R."/>
            <person name="Galperin M.Y."/>
            <person name="Anderson I.J."/>
            <person name="Ivanova N."/>
            <person name="Dalin E."/>
            <person name="Martinez M."/>
            <person name="Lapidus A."/>
            <person name="Hauser L."/>
            <person name="Land M."/>
            <person name="Thomas T."/>
            <person name="Cavicchioli R."/>
        </authorList>
    </citation>
    <scope>NUCLEOTIDE SEQUENCE [LARGE SCALE GENOMIC DNA]</scope>
    <source>
        <strain>DSM 6242 / NBRC 107633 / OCM 468 / ACE-M</strain>
    </source>
</reference>